<gene>
    <name evidence="1" type="primary">leuS</name>
    <name type="ordered locus">Nham_0098</name>
</gene>
<feature type="chain" id="PRO_1000009379" description="Leucine--tRNA ligase">
    <location>
        <begin position="1"/>
        <end position="878"/>
    </location>
</feature>
<feature type="short sequence motif" description="'HIGH' region">
    <location>
        <begin position="43"/>
        <end position="53"/>
    </location>
</feature>
<feature type="short sequence motif" description="'KMSKS' region">
    <location>
        <begin position="630"/>
        <end position="634"/>
    </location>
</feature>
<feature type="binding site" evidence="1">
    <location>
        <position position="633"/>
    </location>
    <ligand>
        <name>ATP</name>
        <dbReference type="ChEBI" id="CHEBI:30616"/>
    </ligand>
</feature>
<sequence>MTSDRYNARDAEPRWQAAWDQQAIFATKNDDPREKYYVLEMFPYPSGRIHIGHVRNYTLGDVIARYMRAKGYNVLHPMGWDAFGLPAENAAIERKVAPKAWTYDNIKAMKKQLRSIGLSLDWAREFATCDPSYYKHQQKMFLDFLRAGLAEREKRKINWDPVDMTVLANEQVIDGRGWRSGAVVEQREMNQWVFKITKYSQELLEALDTLDRWPDKVRLMQRNWIGRSEGLLLRFALDPATTPNGEGELKIFTTRPDTLFGAKFMAIAPDHPLAQAAAKDNPALAEFIAECKRRGTAQAEIDTAEKMGFDTGIRAIHPFDPDWTLPVYVANFILMEYGTGAIFGCPAHDQRDLDFVNKYGLGNTPVVCPEGQDPKTLVITDTAYDGDGRMINSRFLDGMTAEAAKKEVAKRLESEMRGNMPVGERKVNFRLRDWGISRQRYWGCPIPVIHCPKCDVVPVPENDLPVTLPEDVTFDKPGNALDHHPTWKHVTCPQCGARATRETDTMDTFVDSSWYFARFTDPWNETAPTTPEIANRMMPVDQYIGGVEHAILHLLYSRFFTRAMKATGHLSMDEPFKGMFTQGMVVHETYRKADGGWASPDEVGIEAVGNGRRATLISTGEPVEIGAVEKMSKSKRNTVDPDDIIGSYGADTARWFMLSDSPPDRDVIWSEEGVQGASRFMQRLWRLVNESAEAGKAAPRDKPATFGTDALALRKAAHGALDKVSTGIERLHFNVCLANIREFANTLAETLARFGTRTSDLAPDIAWSLREAATILVQLFSPMMPHLSEECWHALGHTGLVSEARWPQIERDLLVEDTVTLPVQVNGKKRGEVTVASSAPNPEIETAVLALDAVRQALGGKPARKIIIVPQRIVNVVG</sequence>
<name>SYL_NITHX</name>
<evidence type="ECO:0000255" key="1">
    <source>
        <dbReference type="HAMAP-Rule" id="MF_00049"/>
    </source>
</evidence>
<keyword id="KW-0030">Aminoacyl-tRNA synthetase</keyword>
<keyword id="KW-0067">ATP-binding</keyword>
<keyword id="KW-0963">Cytoplasm</keyword>
<keyword id="KW-0436">Ligase</keyword>
<keyword id="KW-0547">Nucleotide-binding</keyword>
<keyword id="KW-0648">Protein biosynthesis</keyword>
<keyword id="KW-1185">Reference proteome</keyword>
<dbReference type="EC" id="6.1.1.4" evidence="1"/>
<dbReference type="EMBL" id="CP000319">
    <property type="protein sequence ID" value="ABE60999.1"/>
    <property type="molecule type" value="Genomic_DNA"/>
</dbReference>
<dbReference type="RefSeq" id="WP_011508706.1">
    <property type="nucleotide sequence ID" value="NC_007964.1"/>
</dbReference>
<dbReference type="SMR" id="Q1QRZ8"/>
<dbReference type="STRING" id="323097.Nham_0098"/>
<dbReference type="KEGG" id="nha:Nham_0098"/>
<dbReference type="eggNOG" id="COG0495">
    <property type="taxonomic scope" value="Bacteria"/>
</dbReference>
<dbReference type="HOGENOM" id="CLU_004427_0_0_5"/>
<dbReference type="OrthoDB" id="9810365at2"/>
<dbReference type="Proteomes" id="UP000001953">
    <property type="component" value="Chromosome"/>
</dbReference>
<dbReference type="GO" id="GO:0005829">
    <property type="term" value="C:cytosol"/>
    <property type="evidence" value="ECO:0007669"/>
    <property type="project" value="TreeGrafter"/>
</dbReference>
<dbReference type="GO" id="GO:0002161">
    <property type="term" value="F:aminoacyl-tRNA deacylase activity"/>
    <property type="evidence" value="ECO:0007669"/>
    <property type="project" value="InterPro"/>
</dbReference>
<dbReference type="GO" id="GO:0005524">
    <property type="term" value="F:ATP binding"/>
    <property type="evidence" value="ECO:0007669"/>
    <property type="project" value="UniProtKB-UniRule"/>
</dbReference>
<dbReference type="GO" id="GO:0004823">
    <property type="term" value="F:leucine-tRNA ligase activity"/>
    <property type="evidence" value="ECO:0007669"/>
    <property type="project" value="UniProtKB-UniRule"/>
</dbReference>
<dbReference type="GO" id="GO:0006429">
    <property type="term" value="P:leucyl-tRNA aminoacylation"/>
    <property type="evidence" value="ECO:0007669"/>
    <property type="project" value="UniProtKB-UniRule"/>
</dbReference>
<dbReference type="CDD" id="cd07958">
    <property type="entry name" value="Anticodon_Ia_Leu_BEm"/>
    <property type="match status" value="1"/>
</dbReference>
<dbReference type="CDD" id="cd00812">
    <property type="entry name" value="LeuRS_core"/>
    <property type="match status" value="1"/>
</dbReference>
<dbReference type="FunFam" id="1.10.730.10:FF:000002">
    <property type="entry name" value="Leucine--tRNA ligase"/>
    <property type="match status" value="1"/>
</dbReference>
<dbReference type="FunFam" id="3.40.50.620:FF:000003">
    <property type="entry name" value="Leucine--tRNA ligase"/>
    <property type="match status" value="1"/>
</dbReference>
<dbReference type="FunFam" id="3.40.50.620:FF:000056">
    <property type="entry name" value="Leucine--tRNA ligase"/>
    <property type="match status" value="1"/>
</dbReference>
<dbReference type="Gene3D" id="2.20.28.290">
    <property type="match status" value="1"/>
</dbReference>
<dbReference type="Gene3D" id="3.10.20.590">
    <property type="match status" value="1"/>
</dbReference>
<dbReference type="Gene3D" id="3.40.50.620">
    <property type="entry name" value="HUPs"/>
    <property type="match status" value="2"/>
</dbReference>
<dbReference type="Gene3D" id="1.10.730.10">
    <property type="entry name" value="Isoleucyl-tRNA Synthetase, Domain 1"/>
    <property type="match status" value="2"/>
</dbReference>
<dbReference type="HAMAP" id="MF_00049_B">
    <property type="entry name" value="Leu_tRNA_synth_B"/>
    <property type="match status" value="1"/>
</dbReference>
<dbReference type="InterPro" id="IPR001412">
    <property type="entry name" value="aa-tRNA-synth_I_CS"/>
</dbReference>
<dbReference type="InterPro" id="IPR002300">
    <property type="entry name" value="aa-tRNA-synth_Ia"/>
</dbReference>
<dbReference type="InterPro" id="IPR002302">
    <property type="entry name" value="Leu-tRNA-ligase"/>
</dbReference>
<dbReference type="InterPro" id="IPR025709">
    <property type="entry name" value="Leu_tRNA-synth_edit"/>
</dbReference>
<dbReference type="InterPro" id="IPR013155">
    <property type="entry name" value="M/V/L/I-tRNA-synth_anticd-bd"/>
</dbReference>
<dbReference type="InterPro" id="IPR015413">
    <property type="entry name" value="Methionyl/Leucyl_tRNA_Synth"/>
</dbReference>
<dbReference type="InterPro" id="IPR014729">
    <property type="entry name" value="Rossmann-like_a/b/a_fold"/>
</dbReference>
<dbReference type="InterPro" id="IPR009080">
    <property type="entry name" value="tRNAsynth_Ia_anticodon-bd"/>
</dbReference>
<dbReference type="InterPro" id="IPR009008">
    <property type="entry name" value="Val/Leu/Ile-tRNA-synth_edit"/>
</dbReference>
<dbReference type="NCBIfam" id="TIGR00396">
    <property type="entry name" value="leuS_bact"/>
    <property type="match status" value="1"/>
</dbReference>
<dbReference type="PANTHER" id="PTHR43740:SF2">
    <property type="entry name" value="LEUCINE--TRNA LIGASE, MITOCHONDRIAL"/>
    <property type="match status" value="1"/>
</dbReference>
<dbReference type="PANTHER" id="PTHR43740">
    <property type="entry name" value="LEUCYL-TRNA SYNTHETASE"/>
    <property type="match status" value="1"/>
</dbReference>
<dbReference type="Pfam" id="PF08264">
    <property type="entry name" value="Anticodon_1"/>
    <property type="match status" value="1"/>
</dbReference>
<dbReference type="Pfam" id="PF00133">
    <property type="entry name" value="tRNA-synt_1"/>
    <property type="match status" value="2"/>
</dbReference>
<dbReference type="Pfam" id="PF13603">
    <property type="entry name" value="tRNA-synt_1_2"/>
    <property type="match status" value="1"/>
</dbReference>
<dbReference type="Pfam" id="PF09334">
    <property type="entry name" value="tRNA-synt_1g"/>
    <property type="match status" value="1"/>
</dbReference>
<dbReference type="PRINTS" id="PR00985">
    <property type="entry name" value="TRNASYNTHLEU"/>
</dbReference>
<dbReference type="SUPFAM" id="SSF47323">
    <property type="entry name" value="Anticodon-binding domain of a subclass of class I aminoacyl-tRNA synthetases"/>
    <property type="match status" value="1"/>
</dbReference>
<dbReference type="SUPFAM" id="SSF52374">
    <property type="entry name" value="Nucleotidylyl transferase"/>
    <property type="match status" value="1"/>
</dbReference>
<dbReference type="SUPFAM" id="SSF50677">
    <property type="entry name" value="ValRS/IleRS/LeuRS editing domain"/>
    <property type="match status" value="1"/>
</dbReference>
<dbReference type="PROSITE" id="PS00178">
    <property type="entry name" value="AA_TRNA_LIGASE_I"/>
    <property type="match status" value="1"/>
</dbReference>
<organism>
    <name type="scientific">Nitrobacter hamburgensis (strain DSM 10229 / NCIMB 13809 / X14)</name>
    <dbReference type="NCBI Taxonomy" id="323097"/>
    <lineage>
        <taxon>Bacteria</taxon>
        <taxon>Pseudomonadati</taxon>
        <taxon>Pseudomonadota</taxon>
        <taxon>Alphaproteobacteria</taxon>
        <taxon>Hyphomicrobiales</taxon>
        <taxon>Nitrobacteraceae</taxon>
        <taxon>Nitrobacter</taxon>
    </lineage>
</organism>
<accession>Q1QRZ8</accession>
<reference key="1">
    <citation type="submission" date="2006-03" db="EMBL/GenBank/DDBJ databases">
        <title>Complete sequence of chromosome of Nitrobacter hamburgensis X14.</title>
        <authorList>
            <consortium name="US DOE Joint Genome Institute"/>
            <person name="Copeland A."/>
            <person name="Lucas S."/>
            <person name="Lapidus A."/>
            <person name="Barry K."/>
            <person name="Detter J.C."/>
            <person name="Glavina del Rio T."/>
            <person name="Hammon N."/>
            <person name="Israni S."/>
            <person name="Dalin E."/>
            <person name="Tice H."/>
            <person name="Pitluck S."/>
            <person name="Chain P."/>
            <person name="Malfatti S."/>
            <person name="Shin M."/>
            <person name="Vergez L."/>
            <person name="Schmutz J."/>
            <person name="Larimer F."/>
            <person name="Land M."/>
            <person name="Hauser L."/>
            <person name="Kyrpides N."/>
            <person name="Ivanova N."/>
            <person name="Ward B."/>
            <person name="Arp D."/>
            <person name="Klotz M."/>
            <person name="Stein L."/>
            <person name="O'Mullan G."/>
            <person name="Starkenburg S."/>
            <person name="Sayavedra L."/>
            <person name="Poret-Peterson A.T."/>
            <person name="Gentry M.E."/>
            <person name="Bruce D."/>
            <person name="Richardson P."/>
        </authorList>
    </citation>
    <scope>NUCLEOTIDE SEQUENCE [LARGE SCALE GENOMIC DNA]</scope>
    <source>
        <strain>DSM 10229 / NCIMB 13809 / X14</strain>
    </source>
</reference>
<comment type="catalytic activity">
    <reaction evidence="1">
        <text>tRNA(Leu) + L-leucine + ATP = L-leucyl-tRNA(Leu) + AMP + diphosphate</text>
        <dbReference type="Rhea" id="RHEA:11688"/>
        <dbReference type="Rhea" id="RHEA-COMP:9613"/>
        <dbReference type="Rhea" id="RHEA-COMP:9622"/>
        <dbReference type="ChEBI" id="CHEBI:30616"/>
        <dbReference type="ChEBI" id="CHEBI:33019"/>
        <dbReference type="ChEBI" id="CHEBI:57427"/>
        <dbReference type="ChEBI" id="CHEBI:78442"/>
        <dbReference type="ChEBI" id="CHEBI:78494"/>
        <dbReference type="ChEBI" id="CHEBI:456215"/>
        <dbReference type="EC" id="6.1.1.4"/>
    </reaction>
</comment>
<comment type="subcellular location">
    <subcellularLocation>
        <location evidence="1">Cytoplasm</location>
    </subcellularLocation>
</comment>
<comment type="similarity">
    <text evidence="1">Belongs to the class-I aminoacyl-tRNA synthetase family.</text>
</comment>
<proteinExistence type="inferred from homology"/>
<protein>
    <recommendedName>
        <fullName evidence="1">Leucine--tRNA ligase</fullName>
        <ecNumber evidence="1">6.1.1.4</ecNumber>
    </recommendedName>
    <alternativeName>
        <fullName evidence="1">Leucyl-tRNA synthetase</fullName>
        <shortName evidence="1">LeuRS</shortName>
    </alternativeName>
</protein>